<name>RL17_LISMO</name>
<sequence length="135" mass="15215">MGYRKLGRTSSQRKALLRDLATDLIVFERIETTEARAKEIRKVVEKLITSGKKGDLHARRQAAAFIRHEVVEVVQVDAKGKDGSTVKKNRPVYALQKLFDDVAPRYAERQGGYTRILKKGPRRGDGAPMVIIELV</sequence>
<protein>
    <recommendedName>
        <fullName evidence="1">Large ribosomal subunit protein bL17</fullName>
    </recommendedName>
    <alternativeName>
        <fullName evidence="2">50S ribosomal protein L17</fullName>
    </alternativeName>
</protein>
<accession>Q8Y450</accession>
<dbReference type="EMBL" id="AL591983">
    <property type="protein sequence ID" value="CAD00683.1"/>
    <property type="molecule type" value="Genomic_DNA"/>
</dbReference>
<dbReference type="PIR" id="AE1400">
    <property type="entry name" value="AE1400"/>
</dbReference>
<dbReference type="RefSeq" id="NP_466128.1">
    <property type="nucleotide sequence ID" value="NC_003210.1"/>
</dbReference>
<dbReference type="RefSeq" id="WP_003723675.1">
    <property type="nucleotide sequence ID" value="NZ_CP149495.1"/>
</dbReference>
<dbReference type="PDB" id="7NHN">
    <property type="method" value="EM"/>
    <property type="resolution" value="2.90 A"/>
    <property type="chains" value="Q=1-135"/>
</dbReference>
<dbReference type="PDB" id="8A57">
    <property type="method" value="EM"/>
    <property type="resolution" value="2.30 A"/>
    <property type="chains" value="Q=1-135"/>
</dbReference>
<dbReference type="PDB" id="8A5I">
    <property type="method" value="EM"/>
    <property type="resolution" value="2.30 A"/>
    <property type="chains" value="Q=1-135"/>
</dbReference>
<dbReference type="PDB" id="8A63">
    <property type="method" value="EM"/>
    <property type="resolution" value="3.10 A"/>
    <property type="chains" value="Q=1-135"/>
</dbReference>
<dbReference type="PDBsum" id="7NHN"/>
<dbReference type="PDBsum" id="8A57"/>
<dbReference type="PDBsum" id="8A5I"/>
<dbReference type="PDBsum" id="8A63"/>
<dbReference type="EMDB" id="EMD-12334"/>
<dbReference type="EMDB" id="EMD-15161"/>
<dbReference type="EMDB" id="EMD-15175"/>
<dbReference type="EMDB" id="EMD-15204"/>
<dbReference type="SMR" id="Q8Y450"/>
<dbReference type="STRING" id="169963.gene:17595323"/>
<dbReference type="PaxDb" id="169963-lmo2605"/>
<dbReference type="EnsemblBacteria" id="CAD00683">
    <property type="protein sequence ID" value="CAD00683"/>
    <property type="gene ID" value="CAD00683"/>
</dbReference>
<dbReference type="GeneID" id="93240486"/>
<dbReference type="GeneID" id="987205"/>
<dbReference type="KEGG" id="lmo:lmo2605"/>
<dbReference type="PATRIC" id="fig|169963.11.peg.2669"/>
<dbReference type="eggNOG" id="COG0203">
    <property type="taxonomic scope" value="Bacteria"/>
</dbReference>
<dbReference type="HOGENOM" id="CLU_074407_2_2_9"/>
<dbReference type="OrthoDB" id="9809073at2"/>
<dbReference type="PhylomeDB" id="Q8Y450"/>
<dbReference type="BioCyc" id="LMON169963:LMO2605-MONOMER"/>
<dbReference type="Proteomes" id="UP000000817">
    <property type="component" value="Chromosome"/>
</dbReference>
<dbReference type="GO" id="GO:0022625">
    <property type="term" value="C:cytosolic large ribosomal subunit"/>
    <property type="evidence" value="ECO:0000318"/>
    <property type="project" value="GO_Central"/>
</dbReference>
<dbReference type="GO" id="GO:0003735">
    <property type="term" value="F:structural constituent of ribosome"/>
    <property type="evidence" value="ECO:0000318"/>
    <property type="project" value="GO_Central"/>
</dbReference>
<dbReference type="GO" id="GO:0006412">
    <property type="term" value="P:translation"/>
    <property type="evidence" value="ECO:0007669"/>
    <property type="project" value="UniProtKB-UniRule"/>
</dbReference>
<dbReference type="FunFam" id="3.90.1030.10:FF:000002">
    <property type="entry name" value="50S ribosomal protein L17"/>
    <property type="match status" value="1"/>
</dbReference>
<dbReference type="Gene3D" id="3.90.1030.10">
    <property type="entry name" value="Ribosomal protein L17"/>
    <property type="match status" value="1"/>
</dbReference>
<dbReference type="HAMAP" id="MF_01368">
    <property type="entry name" value="Ribosomal_bL17"/>
    <property type="match status" value="1"/>
</dbReference>
<dbReference type="InterPro" id="IPR000456">
    <property type="entry name" value="Ribosomal_bL17"/>
</dbReference>
<dbReference type="InterPro" id="IPR047859">
    <property type="entry name" value="Ribosomal_bL17_CS"/>
</dbReference>
<dbReference type="InterPro" id="IPR036373">
    <property type="entry name" value="Ribosomal_bL17_sf"/>
</dbReference>
<dbReference type="NCBIfam" id="TIGR00059">
    <property type="entry name" value="L17"/>
    <property type="match status" value="1"/>
</dbReference>
<dbReference type="PANTHER" id="PTHR14413:SF16">
    <property type="entry name" value="LARGE RIBOSOMAL SUBUNIT PROTEIN BL17M"/>
    <property type="match status" value="1"/>
</dbReference>
<dbReference type="PANTHER" id="PTHR14413">
    <property type="entry name" value="RIBOSOMAL PROTEIN L17"/>
    <property type="match status" value="1"/>
</dbReference>
<dbReference type="Pfam" id="PF01196">
    <property type="entry name" value="Ribosomal_L17"/>
    <property type="match status" value="1"/>
</dbReference>
<dbReference type="SUPFAM" id="SSF64263">
    <property type="entry name" value="Prokaryotic ribosomal protein L17"/>
    <property type="match status" value="1"/>
</dbReference>
<dbReference type="PROSITE" id="PS01167">
    <property type="entry name" value="RIBOSOMAL_L17"/>
    <property type="match status" value="1"/>
</dbReference>
<comment type="subunit">
    <text evidence="1">Part of the 50S ribosomal subunit. Contacts protein L32.</text>
</comment>
<comment type="similarity">
    <text evidence="1">Belongs to the bacterial ribosomal protein bL17 family.</text>
</comment>
<proteinExistence type="evidence at protein level"/>
<organism>
    <name type="scientific">Listeria monocytogenes serovar 1/2a (strain ATCC BAA-679 / EGD-e)</name>
    <dbReference type="NCBI Taxonomy" id="169963"/>
    <lineage>
        <taxon>Bacteria</taxon>
        <taxon>Bacillati</taxon>
        <taxon>Bacillota</taxon>
        <taxon>Bacilli</taxon>
        <taxon>Bacillales</taxon>
        <taxon>Listeriaceae</taxon>
        <taxon>Listeria</taxon>
    </lineage>
</organism>
<gene>
    <name evidence="1" type="primary">rplQ</name>
    <name type="ordered locus">lmo2605</name>
</gene>
<evidence type="ECO:0000255" key="1">
    <source>
        <dbReference type="HAMAP-Rule" id="MF_01368"/>
    </source>
</evidence>
<evidence type="ECO:0000305" key="2"/>
<evidence type="ECO:0007829" key="3">
    <source>
        <dbReference type="PDB" id="8A57"/>
    </source>
</evidence>
<reference key="1">
    <citation type="journal article" date="2001" name="Science">
        <title>Comparative genomics of Listeria species.</title>
        <authorList>
            <person name="Glaser P."/>
            <person name="Frangeul L."/>
            <person name="Buchrieser C."/>
            <person name="Rusniok C."/>
            <person name="Amend A."/>
            <person name="Baquero F."/>
            <person name="Berche P."/>
            <person name="Bloecker H."/>
            <person name="Brandt P."/>
            <person name="Chakraborty T."/>
            <person name="Charbit A."/>
            <person name="Chetouani F."/>
            <person name="Couve E."/>
            <person name="de Daruvar A."/>
            <person name="Dehoux P."/>
            <person name="Domann E."/>
            <person name="Dominguez-Bernal G."/>
            <person name="Duchaud E."/>
            <person name="Durant L."/>
            <person name="Dussurget O."/>
            <person name="Entian K.-D."/>
            <person name="Fsihi H."/>
            <person name="Garcia-del Portillo F."/>
            <person name="Garrido P."/>
            <person name="Gautier L."/>
            <person name="Goebel W."/>
            <person name="Gomez-Lopez N."/>
            <person name="Hain T."/>
            <person name="Hauf J."/>
            <person name="Jackson D."/>
            <person name="Jones L.-M."/>
            <person name="Kaerst U."/>
            <person name="Kreft J."/>
            <person name="Kuhn M."/>
            <person name="Kunst F."/>
            <person name="Kurapkat G."/>
            <person name="Madueno E."/>
            <person name="Maitournam A."/>
            <person name="Mata Vicente J."/>
            <person name="Ng E."/>
            <person name="Nedjari H."/>
            <person name="Nordsiek G."/>
            <person name="Novella S."/>
            <person name="de Pablos B."/>
            <person name="Perez-Diaz J.-C."/>
            <person name="Purcell R."/>
            <person name="Remmel B."/>
            <person name="Rose M."/>
            <person name="Schlueter T."/>
            <person name="Simoes N."/>
            <person name="Tierrez A."/>
            <person name="Vazquez-Boland J.-A."/>
            <person name="Voss H."/>
            <person name="Wehland J."/>
            <person name="Cossart P."/>
        </authorList>
    </citation>
    <scope>NUCLEOTIDE SEQUENCE [LARGE SCALE GENOMIC DNA]</scope>
    <source>
        <strain>ATCC BAA-679 / EGD-e</strain>
    </source>
</reference>
<keyword id="KW-0002">3D-structure</keyword>
<keyword id="KW-1185">Reference proteome</keyword>
<keyword id="KW-0687">Ribonucleoprotein</keyword>
<keyword id="KW-0689">Ribosomal protein</keyword>
<feature type="chain" id="PRO_1000055865" description="Large ribosomal subunit protein bL17">
    <location>
        <begin position="1"/>
        <end position="135"/>
    </location>
</feature>
<feature type="helix" evidence="3">
    <location>
        <begin position="10"/>
        <end position="27"/>
    </location>
</feature>
<feature type="strand" evidence="3">
    <location>
        <begin position="28"/>
        <end position="33"/>
    </location>
</feature>
<feature type="helix" evidence="3">
    <location>
        <begin position="34"/>
        <end position="53"/>
    </location>
</feature>
<feature type="helix" evidence="3">
    <location>
        <begin position="56"/>
        <end position="63"/>
    </location>
</feature>
<feature type="strand" evidence="3">
    <location>
        <begin position="70"/>
        <end position="73"/>
    </location>
</feature>
<feature type="strand" evidence="3">
    <location>
        <begin position="91"/>
        <end position="93"/>
    </location>
</feature>
<feature type="helix" evidence="3">
    <location>
        <begin position="94"/>
        <end position="100"/>
    </location>
</feature>
<feature type="helix" evidence="3">
    <location>
        <begin position="103"/>
        <end position="106"/>
    </location>
</feature>
<feature type="strand" evidence="3">
    <location>
        <begin position="114"/>
        <end position="121"/>
    </location>
</feature>
<feature type="turn" evidence="3">
    <location>
        <begin position="123"/>
        <end position="125"/>
    </location>
</feature>
<feature type="strand" evidence="3">
    <location>
        <begin position="128"/>
        <end position="134"/>
    </location>
</feature>